<accession>P09243</accession>
<protein>
    <recommendedName>
        <fullName>Tubulin alpha-2 chain</fullName>
        <ecNumber evidence="2">3.6.5.-</ecNumber>
    </recommendedName>
</protein>
<name>TBA2_STYLE</name>
<sequence>MREVISIHVGQAGIQVGNACWELFCLEHGIQPDGQMPSNKTIGGGDDAFNTFFSETGTGKHVPRCVFLDLGPTVIDEVRTGTYRQLFHPEQLISGKEDAANNFARGHYTIGKEIVDLCLDGIRKLADQCTGLQGFLVFNSVGGGTGSGLGSLLLERLSVDYGKKSKLGFTIYPSPQVSTAVVEPYNSVLSTHSLLEHTDVAVMLDNEAVYDICRRNLDIERPTYTNLNRLIAQVISSLTASLRFDGALNVDVTEFQTNLVPYPRIHFMLSSAPVISAEKAYHEQLSVAEITNSAFEPASMMAKCDPRHGKYMACCLMYRGDVVPKDVNAAVATIKTKRTIQFVDWCPTGFKCGINYQPPTVVPSGDLAKVMRAVCMISNSTAIAEVFSRIDHKFDLMYAKRAFVHWYVGEGMEEGEFSEAREDLAALEKDYEEVGIETAEGEGEEEGME</sequence>
<feature type="chain" id="PRO_0000048229" description="Tubulin alpha-2 chain">
    <location>
        <begin position="1"/>
        <end position="449"/>
    </location>
</feature>
<feature type="active site" evidence="2">
    <location>
        <position position="254"/>
    </location>
</feature>
<feature type="binding site" evidence="2">
    <location>
        <position position="11"/>
    </location>
    <ligand>
        <name>GTP</name>
        <dbReference type="ChEBI" id="CHEBI:37565"/>
    </ligand>
</feature>
<feature type="binding site" evidence="2">
    <location>
        <position position="140"/>
    </location>
    <ligand>
        <name>GTP</name>
        <dbReference type="ChEBI" id="CHEBI:37565"/>
    </ligand>
</feature>
<feature type="binding site" evidence="2">
    <location>
        <position position="144"/>
    </location>
    <ligand>
        <name>GTP</name>
        <dbReference type="ChEBI" id="CHEBI:37565"/>
    </ligand>
</feature>
<feature type="binding site" evidence="2">
    <location>
        <position position="145"/>
    </location>
    <ligand>
        <name>GTP</name>
        <dbReference type="ChEBI" id="CHEBI:37565"/>
    </ligand>
</feature>
<feature type="binding site" evidence="2">
    <location>
        <position position="179"/>
    </location>
    <ligand>
        <name>GTP</name>
        <dbReference type="ChEBI" id="CHEBI:37565"/>
    </ligand>
</feature>
<feature type="binding site" evidence="2">
    <location>
        <position position="206"/>
    </location>
    <ligand>
        <name>GTP</name>
        <dbReference type="ChEBI" id="CHEBI:37565"/>
    </ligand>
</feature>
<feature type="binding site" evidence="2">
    <location>
        <position position="228"/>
    </location>
    <ligand>
        <name>GTP</name>
        <dbReference type="ChEBI" id="CHEBI:37565"/>
    </ligand>
</feature>
<feature type="modified residue" description="N6-acetyllysine" evidence="1">
    <location>
        <position position="40"/>
    </location>
</feature>
<evidence type="ECO:0000250" key="1"/>
<evidence type="ECO:0000250" key="2">
    <source>
        <dbReference type="UniProtKB" id="P68363"/>
    </source>
</evidence>
<evidence type="ECO:0000305" key="3"/>
<organism>
    <name type="scientific">Stylonychia lemnae</name>
    <name type="common">Ciliate</name>
    <dbReference type="NCBI Taxonomy" id="5949"/>
    <lineage>
        <taxon>Eukaryota</taxon>
        <taxon>Sar</taxon>
        <taxon>Alveolata</taxon>
        <taxon>Ciliophora</taxon>
        <taxon>Intramacronucleata</taxon>
        <taxon>Spirotrichea</taxon>
        <taxon>Stichotrichia</taxon>
        <taxon>Sporadotrichida</taxon>
        <taxon>Oxytrichidae</taxon>
        <taxon>Stylonychinae</taxon>
        <taxon>Stylonychia</taxon>
    </lineage>
</organism>
<reference key="1">
    <citation type="journal article" date="1988" name="Curr. Genet.">
        <title>Both alpha-tubulin genes are transcriptionally active in Stylonychia lemnae.</title>
        <authorList>
            <person name="Helftenbein E."/>
            <person name="Mueller E."/>
        </authorList>
    </citation>
    <scope>NUCLEOTIDE SEQUENCE [GENOMIC DNA]</scope>
    <source>
        <strain>Dorum</strain>
    </source>
</reference>
<keyword id="KW-0007">Acetylation</keyword>
<keyword id="KW-0963">Cytoplasm</keyword>
<keyword id="KW-0206">Cytoskeleton</keyword>
<keyword id="KW-0342">GTP-binding</keyword>
<keyword id="KW-0378">Hydrolase</keyword>
<keyword id="KW-0493">Microtubule</keyword>
<keyword id="KW-0547">Nucleotide-binding</keyword>
<comment type="function">
    <text>Tubulin is the major constituent of microtubules, a cylinder consisting of laterally associated linear protofilaments composed of alpha- and beta-tubulin heterodimers. Microtubules grow by the addition of GTP-tubulin dimers to the microtubule end, where a stabilizing cap forms. Below the cap, tubulin dimers are in GDP-bound state, owing to GTPase activity of alpha-tubulin.</text>
</comment>
<comment type="catalytic activity">
    <reaction evidence="2">
        <text>GTP + H2O = GDP + phosphate + H(+)</text>
        <dbReference type="Rhea" id="RHEA:19669"/>
        <dbReference type="ChEBI" id="CHEBI:15377"/>
        <dbReference type="ChEBI" id="CHEBI:15378"/>
        <dbReference type="ChEBI" id="CHEBI:37565"/>
        <dbReference type="ChEBI" id="CHEBI:43474"/>
        <dbReference type="ChEBI" id="CHEBI:58189"/>
    </reaction>
    <physiologicalReaction direction="left-to-right" evidence="2">
        <dbReference type="Rhea" id="RHEA:19670"/>
    </physiologicalReaction>
</comment>
<comment type="subunit">
    <text>Dimer of alpha and beta chains. A typical microtubule is a hollow water-filled tube with an outer diameter of 25 nm and an inner diameter of 15 nM. Alpha-beta heterodimers associate head-to-tail to form protofilaments running lengthwise along the microtubule wall with the beta-tubulin subunit facing the microtubule plus end conferring a structural polarity. Microtubules usually have 13 protofilaments but different protofilament numbers can be found in some organisms and specialized cells.</text>
</comment>
<comment type="subcellular location">
    <subcellularLocation>
        <location>Cytoplasm</location>
        <location>Cytoskeleton</location>
    </subcellularLocation>
</comment>
<comment type="PTM">
    <text evidence="1">Acetylation of alpha chains at Lys-40 stabilizes microtubules and affects affinity and processivity of microtubule motors. This modification has a role in multiple cellular functions, ranging from cell motility, cell cycle progression or cell differentiation to intracellular trafficking and signaling (By similarity).</text>
</comment>
<comment type="similarity">
    <text evidence="3">Belongs to the tubulin family.</text>
</comment>
<proteinExistence type="inferred from homology"/>
<dbReference type="EC" id="3.6.5.-" evidence="2"/>
<dbReference type="EMBL" id="X12365">
    <property type="protein sequence ID" value="CAA30926.1"/>
    <property type="molecule type" value="Genomic_DNA"/>
</dbReference>
<dbReference type="PIR" id="S01053">
    <property type="entry name" value="S01053"/>
</dbReference>
<dbReference type="SMR" id="P09243"/>
<dbReference type="GO" id="GO:0005737">
    <property type="term" value="C:cytoplasm"/>
    <property type="evidence" value="ECO:0007669"/>
    <property type="project" value="UniProtKB-KW"/>
</dbReference>
<dbReference type="GO" id="GO:0005874">
    <property type="term" value="C:microtubule"/>
    <property type="evidence" value="ECO:0007669"/>
    <property type="project" value="UniProtKB-KW"/>
</dbReference>
<dbReference type="GO" id="GO:0005525">
    <property type="term" value="F:GTP binding"/>
    <property type="evidence" value="ECO:0007669"/>
    <property type="project" value="UniProtKB-KW"/>
</dbReference>
<dbReference type="GO" id="GO:0016787">
    <property type="term" value="F:hydrolase activity"/>
    <property type="evidence" value="ECO:0007669"/>
    <property type="project" value="UniProtKB-KW"/>
</dbReference>
<dbReference type="GO" id="GO:0005200">
    <property type="term" value="F:structural constituent of cytoskeleton"/>
    <property type="evidence" value="ECO:0007669"/>
    <property type="project" value="InterPro"/>
</dbReference>
<dbReference type="GO" id="GO:0007017">
    <property type="term" value="P:microtubule-based process"/>
    <property type="evidence" value="ECO:0007669"/>
    <property type="project" value="InterPro"/>
</dbReference>
<dbReference type="CDD" id="cd02186">
    <property type="entry name" value="alpha_tubulin"/>
    <property type="match status" value="1"/>
</dbReference>
<dbReference type="FunFam" id="1.10.287.600:FF:000005">
    <property type="entry name" value="Tubulin alpha chain"/>
    <property type="match status" value="1"/>
</dbReference>
<dbReference type="FunFam" id="3.30.1330.20:FF:000001">
    <property type="entry name" value="Tubulin alpha chain"/>
    <property type="match status" value="1"/>
</dbReference>
<dbReference type="FunFam" id="3.40.50.1440:FF:000004">
    <property type="entry name" value="Tubulin alpha chain"/>
    <property type="match status" value="1"/>
</dbReference>
<dbReference type="Gene3D" id="1.10.287.600">
    <property type="entry name" value="Helix hairpin bin"/>
    <property type="match status" value="1"/>
</dbReference>
<dbReference type="Gene3D" id="3.30.1330.20">
    <property type="entry name" value="Tubulin/FtsZ, C-terminal domain"/>
    <property type="match status" value="1"/>
</dbReference>
<dbReference type="Gene3D" id="3.40.50.1440">
    <property type="entry name" value="Tubulin/FtsZ, GTPase domain"/>
    <property type="match status" value="1"/>
</dbReference>
<dbReference type="InterPro" id="IPR002452">
    <property type="entry name" value="Alpha_tubulin"/>
</dbReference>
<dbReference type="InterPro" id="IPR008280">
    <property type="entry name" value="Tub_FtsZ_C"/>
</dbReference>
<dbReference type="InterPro" id="IPR000217">
    <property type="entry name" value="Tubulin"/>
</dbReference>
<dbReference type="InterPro" id="IPR037103">
    <property type="entry name" value="Tubulin/FtsZ-like_C"/>
</dbReference>
<dbReference type="InterPro" id="IPR018316">
    <property type="entry name" value="Tubulin/FtsZ_2-layer-sand-dom"/>
</dbReference>
<dbReference type="InterPro" id="IPR036525">
    <property type="entry name" value="Tubulin/FtsZ_GTPase_sf"/>
</dbReference>
<dbReference type="InterPro" id="IPR023123">
    <property type="entry name" value="Tubulin_C"/>
</dbReference>
<dbReference type="InterPro" id="IPR017975">
    <property type="entry name" value="Tubulin_CS"/>
</dbReference>
<dbReference type="InterPro" id="IPR003008">
    <property type="entry name" value="Tubulin_FtsZ_GTPase"/>
</dbReference>
<dbReference type="PANTHER" id="PTHR11588">
    <property type="entry name" value="TUBULIN"/>
    <property type="match status" value="1"/>
</dbReference>
<dbReference type="Pfam" id="PF00091">
    <property type="entry name" value="Tubulin"/>
    <property type="match status" value="1"/>
</dbReference>
<dbReference type="Pfam" id="PF03953">
    <property type="entry name" value="Tubulin_C"/>
    <property type="match status" value="1"/>
</dbReference>
<dbReference type="PRINTS" id="PR01162">
    <property type="entry name" value="ALPHATUBULIN"/>
</dbReference>
<dbReference type="PRINTS" id="PR01161">
    <property type="entry name" value="TUBULIN"/>
</dbReference>
<dbReference type="SMART" id="SM00864">
    <property type="entry name" value="Tubulin"/>
    <property type="match status" value="1"/>
</dbReference>
<dbReference type="SMART" id="SM00865">
    <property type="entry name" value="Tubulin_C"/>
    <property type="match status" value="1"/>
</dbReference>
<dbReference type="SUPFAM" id="SSF55307">
    <property type="entry name" value="Tubulin C-terminal domain-like"/>
    <property type="match status" value="1"/>
</dbReference>
<dbReference type="SUPFAM" id="SSF52490">
    <property type="entry name" value="Tubulin nucleotide-binding domain-like"/>
    <property type="match status" value="1"/>
</dbReference>
<dbReference type="PROSITE" id="PS00227">
    <property type="entry name" value="TUBULIN"/>
    <property type="match status" value="1"/>
</dbReference>